<organism>
    <name type="scientific">Agrobacterium fabrum (strain C58 / ATCC 33970)</name>
    <name type="common">Agrobacterium tumefaciens (strain C58)</name>
    <dbReference type="NCBI Taxonomy" id="176299"/>
    <lineage>
        <taxon>Bacteria</taxon>
        <taxon>Pseudomonadati</taxon>
        <taxon>Pseudomonadota</taxon>
        <taxon>Alphaproteobacteria</taxon>
        <taxon>Hyphomicrobiales</taxon>
        <taxon>Rhizobiaceae</taxon>
        <taxon>Rhizobium/Agrobacterium group</taxon>
        <taxon>Agrobacterium</taxon>
        <taxon>Agrobacterium tumefaciens complex</taxon>
    </lineage>
</organism>
<gene>
    <name evidence="3" type="primary">hppA</name>
    <name type="synonym">vppA</name>
    <name type="ordered locus">Atu1174</name>
    <name type="ORF">AGR_C_2169</name>
</gene>
<evidence type="ECO:0000250" key="1"/>
<evidence type="ECO:0000255" key="2"/>
<evidence type="ECO:0000255" key="3">
    <source>
        <dbReference type="HAMAP-Rule" id="MF_01129"/>
    </source>
</evidence>
<evidence type="ECO:0000269" key="4">
    <source>
    </source>
</evidence>
<evidence type="ECO:0000305" key="5"/>
<keyword id="KW-0106">Calcium</keyword>
<keyword id="KW-0375">Hydrogen ion transport</keyword>
<keyword id="KW-0406">Ion transport</keyword>
<keyword id="KW-0460">Magnesium</keyword>
<keyword id="KW-0472">Membrane</keyword>
<keyword id="KW-0479">Metal-binding</keyword>
<keyword id="KW-1185">Reference proteome</keyword>
<keyword id="KW-0732">Signal</keyword>
<keyword id="KW-1278">Translocase</keyword>
<keyword id="KW-0812">Transmembrane</keyword>
<keyword id="KW-1133">Transmembrane helix</keyword>
<keyword id="KW-0813">Transport</keyword>
<comment type="function">
    <text evidence="3">Proton pump that utilizes the energy of pyrophosphate hydrolysis as the driving force for proton movement across the membrane. Generates a proton motive force.</text>
</comment>
<comment type="catalytic activity">
    <reaction evidence="3">
        <text>diphosphate + H2O + H(+)(in) = 2 phosphate + 2 H(+)(out)</text>
        <dbReference type="Rhea" id="RHEA:13973"/>
        <dbReference type="ChEBI" id="CHEBI:15377"/>
        <dbReference type="ChEBI" id="CHEBI:15378"/>
        <dbReference type="ChEBI" id="CHEBI:33019"/>
        <dbReference type="ChEBI" id="CHEBI:43474"/>
        <dbReference type="EC" id="7.1.3.1"/>
    </reaction>
</comment>
<comment type="cofactor">
    <cofactor evidence="3">
        <name>Mg(2+)</name>
        <dbReference type="ChEBI" id="CHEBI:18420"/>
    </cofactor>
</comment>
<comment type="subunit">
    <text evidence="3">Homodimer.</text>
</comment>
<comment type="subcellular location">
    <subcellularLocation>
        <location evidence="4">Acidocalcisome membrane</location>
        <topology evidence="3 4">Multi-pass membrane protein</topology>
    </subcellularLocation>
</comment>
<comment type="similarity">
    <text evidence="3">Belongs to the H(+)-translocating pyrophosphatase (TC 3.A.10) family. K(+)-insensitive subfamily.</text>
</comment>
<comment type="sequence caution" evidence="5">
    <conflict type="erroneous initiation">
        <sequence resource="EMBL-CDS" id="AAK86977"/>
    </conflict>
    <text>Truncated N-terminus.</text>
</comment>
<dbReference type="EC" id="7.1.3.1" evidence="3"/>
<dbReference type="EMBL" id="AE007869">
    <property type="protein sequence ID" value="AAK86977.2"/>
    <property type="status" value="ALT_INIT"/>
    <property type="molecule type" value="Genomic_DNA"/>
</dbReference>
<dbReference type="EMBL" id="AH011149">
    <property type="protein sequence ID" value="AAL14977.1"/>
    <property type="molecule type" value="Genomic_DNA"/>
</dbReference>
<dbReference type="EMBL" id="AH011149">
    <property type="protein sequence ID" value="AAL14978.1"/>
    <property type="molecule type" value="Genomic_DNA"/>
</dbReference>
<dbReference type="EMBL" id="AJ251784">
    <property type="protein sequence ID" value="CAC80978.1"/>
    <property type="molecule type" value="Genomic_DNA"/>
</dbReference>
<dbReference type="PIR" id="AD2721">
    <property type="entry name" value="AD2721"/>
</dbReference>
<dbReference type="PIR" id="H97502">
    <property type="entry name" value="H97502"/>
</dbReference>
<dbReference type="RefSeq" id="NP_354192.2">
    <property type="nucleotide sequence ID" value="NC_003062.2"/>
</dbReference>
<dbReference type="RefSeq" id="WP_010971446.1">
    <property type="nucleotide sequence ID" value="NC_003062.2"/>
</dbReference>
<dbReference type="SMR" id="Q8UG67"/>
<dbReference type="STRING" id="176299.Atu1174"/>
<dbReference type="EnsemblBacteria" id="AAK86977">
    <property type="protein sequence ID" value="AAK86977"/>
    <property type="gene ID" value="Atu1174"/>
</dbReference>
<dbReference type="GeneID" id="1133212"/>
<dbReference type="KEGG" id="atu:Atu1174"/>
<dbReference type="PATRIC" id="fig|176299.10.peg.1194"/>
<dbReference type="eggNOG" id="COG3808">
    <property type="taxonomic scope" value="Bacteria"/>
</dbReference>
<dbReference type="HOGENOM" id="CLU_008743_3_1_5"/>
<dbReference type="OrthoDB" id="9808652at2"/>
<dbReference type="Proteomes" id="UP000000813">
    <property type="component" value="Chromosome circular"/>
</dbReference>
<dbReference type="GO" id="GO:0033102">
    <property type="term" value="C:acidocalcisome membrane"/>
    <property type="evidence" value="ECO:0007669"/>
    <property type="project" value="UniProtKB-SubCell"/>
</dbReference>
<dbReference type="GO" id="GO:0005886">
    <property type="term" value="C:plasma membrane"/>
    <property type="evidence" value="ECO:0007669"/>
    <property type="project" value="UniProtKB-UniRule"/>
</dbReference>
<dbReference type="GO" id="GO:0009678">
    <property type="term" value="F:diphosphate hydrolysis-driven proton transmembrane transporter activity"/>
    <property type="evidence" value="ECO:0007669"/>
    <property type="project" value="UniProtKB-UniRule"/>
</dbReference>
<dbReference type="GO" id="GO:0004427">
    <property type="term" value="F:inorganic diphosphate phosphatase activity"/>
    <property type="evidence" value="ECO:0007669"/>
    <property type="project" value="UniProtKB-UniRule"/>
</dbReference>
<dbReference type="GO" id="GO:0000287">
    <property type="term" value="F:magnesium ion binding"/>
    <property type="evidence" value="ECO:0007669"/>
    <property type="project" value="UniProtKB-UniRule"/>
</dbReference>
<dbReference type="HAMAP" id="MF_01129">
    <property type="entry name" value="PPase_energized_pump"/>
    <property type="match status" value="1"/>
</dbReference>
<dbReference type="InterPro" id="IPR004131">
    <property type="entry name" value="PPase-energised_H-pump"/>
</dbReference>
<dbReference type="NCBIfam" id="NF001951">
    <property type="entry name" value="PRK00733.1-2"/>
    <property type="match status" value="1"/>
</dbReference>
<dbReference type="NCBIfam" id="NF001960">
    <property type="entry name" value="PRK00733.3-5"/>
    <property type="match status" value="1"/>
</dbReference>
<dbReference type="NCBIfam" id="TIGR01104">
    <property type="entry name" value="V_PPase"/>
    <property type="match status" value="1"/>
</dbReference>
<dbReference type="PANTHER" id="PTHR31998">
    <property type="entry name" value="K(+)-INSENSITIVE PYROPHOSPHATE-ENERGIZED PROTON PUMP"/>
    <property type="match status" value="1"/>
</dbReference>
<dbReference type="Pfam" id="PF03030">
    <property type="entry name" value="H_PPase"/>
    <property type="match status" value="1"/>
</dbReference>
<dbReference type="PIRSF" id="PIRSF001265">
    <property type="entry name" value="H+-PPase"/>
    <property type="match status" value="1"/>
</dbReference>
<accession>Q8UG67</accession>
<accession>Q8VPZ1</accession>
<accession>Q93AR6</accession>
<accession>Q93AR7</accession>
<name>HPPA_AGRFC</name>
<protein>
    <recommendedName>
        <fullName evidence="3">K(+)-insensitive pyrophosphate-energized proton pump</fullName>
        <ecNumber evidence="3">7.1.3.1</ecNumber>
    </recommendedName>
    <alternativeName>
        <fullName evidence="3">Membrane-bound proton-translocating pyrophosphatase</fullName>
    </alternativeName>
    <alternativeName>
        <fullName evidence="3">Pyrophosphate-energized inorganic pyrophosphatase</fullName>
        <shortName evidence="3">H(+)-PPase</shortName>
    </alternativeName>
</protein>
<reference key="1">
    <citation type="journal article" date="2001" name="Science">
        <title>The genome of the natural genetic engineer Agrobacterium tumefaciens C58.</title>
        <authorList>
            <person name="Wood D.W."/>
            <person name="Setubal J.C."/>
            <person name="Kaul R."/>
            <person name="Monks D.E."/>
            <person name="Kitajima J.P."/>
            <person name="Okura V.K."/>
            <person name="Zhou Y."/>
            <person name="Chen L."/>
            <person name="Wood G.E."/>
            <person name="Almeida N.F. Jr."/>
            <person name="Woo L."/>
            <person name="Chen Y."/>
            <person name="Paulsen I.T."/>
            <person name="Eisen J.A."/>
            <person name="Karp P.D."/>
            <person name="Bovee D. Sr."/>
            <person name="Chapman P."/>
            <person name="Clendenning J."/>
            <person name="Deatherage G."/>
            <person name="Gillet W."/>
            <person name="Grant C."/>
            <person name="Kutyavin T."/>
            <person name="Levy R."/>
            <person name="Li M.-J."/>
            <person name="McClelland E."/>
            <person name="Palmieri A."/>
            <person name="Raymond C."/>
            <person name="Rouse G."/>
            <person name="Saenphimmachak C."/>
            <person name="Wu Z."/>
            <person name="Romero P."/>
            <person name="Gordon D."/>
            <person name="Zhang S."/>
            <person name="Yoo H."/>
            <person name="Tao Y."/>
            <person name="Biddle P."/>
            <person name="Jung M."/>
            <person name="Krespan W."/>
            <person name="Perry M."/>
            <person name="Gordon-Kamm B."/>
            <person name="Liao L."/>
            <person name="Kim S."/>
            <person name="Hendrick C."/>
            <person name="Zhao Z.-Y."/>
            <person name="Dolan M."/>
            <person name="Chumley F."/>
            <person name="Tingey S.V."/>
            <person name="Tomb J.-F."/>
            <person name="Gordon M.P."/>
            <person name="Olson M.V."/>
            <person name="Nester E.W."/>
        </authorList>
    </citation>
    <scope>NUCLEOTIDE SEQUENCE [LARGE SCALE GENOMIC DNA]</scope>
    <source>
        <strain>C58 / ATCC 33970</strain>
    </source>
</reference>
<reference key="2">
    <citation type="journal article" date="2001" name="Science">
        <title>Genome sequence of the plant pathogen and biotechnology agent Agrobacterium tumefaciens C58.</title>
        <authorList>
            <person name="Goodner B."/>
            <person name="Hinkle G."/>
            <person name="Gattung S."/>
            <person name="Miller N."/>
            <person name="Blanchard M."/>
            <person name="Qurollo B."/>
            <person name="Goldman B.S."/>
            <person name="Cao Y."/>
            <person name="Askenazi M."/>
            <person name="Halling C."/>
            <person name="Mullin L."/>
            <person name="Houmiel K."/>
            <person name="Gordon J."/>
            <person name="Vaudin M."/>
            <person name="Iartchouk O."/>
            <person name="Epp A."/>
            <person name="Liu F."/>
            <person name="Wollam C."/>
            <person name="Allinger M."/>
            <person name="Doughty D."/>
            <person name="Scott C."/>
            <person name="Lappas C."/>
            <person name="Markelz B."/>
            <person name="Flanagan C."/>
            <person name="Crowell C."/>
            <person name="Gurson J."/>
            <person name="Lomo C."/>
            <person name="Sear C."/>
            <person name="Strub G."/>
            <person name="Cielo C."/>
            <person name="Slater S."/>
        </authorList>
    </citation>
    <scope>NUCLEOTIDE SEQUENCE [LARGE SCALE GENOMIC DNA]</scope>
    <source>
        <strain>C58 / ATCC 33970</strain>
    </source>
</reference>
<reference key="3">
    <citation type="submission" date="2001-09" db="EMBL/GenBank/DDBJ databases">
        <title>High prevalence of the H+-proton-pumping pyrophosphatase gene in alpha proteobacteria and evidence of lateral transfer during its phylogeny.</title>
        <authorList>
            <person name="Jumas-Bilak E."/>
            <person name="Michaux-Charachon S."/>
            <person name="Teyssier C."/>
            <person name="Ramuz M."/>
        </authorList>
    </citation>
    <scope>NUCLEOTIDE SEQUENCE [GENOMIC DNA] OF 248-454 AND 480-700</scope>
</reference>
<reference key="4">
    <citation type="submission" date="1999-12" db="EMBL/GenBank/DDBJ databases">
        <title>Presence of proton-translocating pyrophosphatase genes in root nodule-making bacteria (Rhizobia) and pathogenic tumour-making bacteria (Agrobacterium).</title>
        <authorList>
            <person name="Perez-Castineira J.R."/>
            <person name="Losada M."/>
            <person name="Serrano A."/>
        </authorList>
    </citation>
    <scope>NUCLEOTIDE SEQUENCE [GENOMIC DNA] OF 441-644</scope>
</reference>
<reference key="5">
    <citation type="journal article" date="2003" name="J. Biol. Chem.">
        <title>Identification of organelles in bacteria similar to acidocalcisomes of unicellular eukaryotes.</title>
        <authorList>
            <person name="Seufferheld M."/>
            <person name="Vieira M.C.F."/>
            <person name="Ruiz F.A."/>
            <person name="Rodrigues C.O."/>
            <person name="Moreno S.N.J."/>
            <person name="Docampo R."/>
        </authorList>
    </citation>
    <scope>CHARACTERIZATION</scope>
    <scope>SUBCELLULAR LOCATION</scope>
</reference>
<sequence>MRMTVIPIVILCGVLSVVYAVWTTKSVLDADQGNERMREIAGYIREGAQAYLTRQYLTIAIVGLIVAVLAWYLLSAIAAIGFVIGAVLSGVAGFVGMHVSVRANLRTAQAASHSLGAGLDIAFKSGAITGMLVAGLALLGVSIYYFVLTSVLGHPPGSRAVIDALVSLGFGASLISIFARLGGGIFTKGADVGGDLVGKVEAGIPEDDPRNPATIADNVGDNVGDCAGMAADLFETYAVSVVATMVLAAIFFAGTPILESAMVYPLAICGACILTSIAGTFFVKLGTNNSIMGALYKGLIATGVFSVAGLAVATYATVGWGTIGTVAGMEITGTNLFFCGLVGLVVTALIVVITEYYTGTNKRPVNSIAQASVTGHGTNVIQGLAVSLESTALPAIVIVGGIIGTYQLGGLFGTGIAVTAMLGLAGMIVALDAFGPVTDNAGGIAEMAGLDPDVRKATDALDAVGNTTKAVTKGYAIGSAGLGALVLFAAYANDLSYFAANGDTYPYFKDIGEISFSLANPYVVAGLLFGGLIPYLFGGIAMTAVGKAASAIVEEVRRQFREKPGIMAGTEKPDYGRAVDLLTKAAIREMVIPSLLPVLAPLVVYFGVLLISGSKASAFAALGASLLGVIINGLFVAISMTSGGGAWDNAKKSFEDGFIDKDGVRHVKGSEAHKASVTGDTVGDPYKDTAGPAVNPAIKITNIVALLLLAVLAH</sequence>
<feature type="signal peptide" evidence="2">
    <location>
        <begin position="1"/>
        <end position="20"/>
    </location>
</feature>
<feature type="chain" id="PRO_0000013525" description="K(+)-insensitive pyrophosphate-energized proton pump">
    <location>
        <begin position="21"/>
        <end position="714"/>
    </location>
</feature>
<feature type="transmembrane region" description="Helical" evidence="3">
    <location>
        <begin position="52"/>
        <end position="74"/>
    </location>
</feature>
<feature type="transmembrane region" description="Helical" evidence="3">
    <location>
        <begin position="85"/>
        <end position="105"/>
    </location>
</feature>
<feature type="transmembrane region" description="Helical" evidence="3">
    <location>
        <begin position="128"/>
        <end position="148"/>
    </location>
</feature>
<feature type="transmembrane region" description="Helical" evidence="3">
    <location>
        <begin position="166"/>
        <end position="186"/>
    </location>
</feature>
<feature type="transmembrane region" description="Helical" evidence="3">
    <location>
        <begin position="238"/>
        <end position="258"/>
    </location>
</feature>
<feature type="transmembrane region" description="Helical" evidence="3">
    <location>
        <begin position="263"/>
        <end position="283"/>
    </location>
</feature>
<feature type="transmembrane region" description="Helical" evidence="3">
    <location>
        <begin position="298"/>
        <end position="318"/>
    </location>
</feature>
<feature type="transmembrane region" description="Helical" evidence="3">
    <location>
        <begin position="333"/>
        <end position="353"/>
    </location>
</feature>
<feature type="transmembrane region" description="Helical" evidence="3">
    <location>
        <begin position="383"/>
        <end position="403"/>
    </location>
</feature>
<feature type="transmembrane region" description="Helical" evidence="3">
    <location>
        <begin position="411"/>
        <end position="431"/>
    </location>
</feature>
<feature type="transmembrane region" description="Helical" evidence="3">
    <location>
        <begin position="470"/>
        <end position="490"/>
    </location>
</feature>
<feature type="transmembrane region" description="Helical" evidence="3">
    <location>
        <begin position="522"/>
        <end position="542"/>
    </location>
</feature>
<feature type="transmembrane region" description="Helical" evidence="3">
    <location>
        <begin position="591"/>
        <end position="611"/>
    </location>
</feature>
<feature type="transmembrane region" description="Helical" evidence="3">
    <location>
        <begin position="618"/>
        <end position="638"/>
    </location>
</feature>
<feature type="transmembrane region" description="Helical" evidence="3">
    <location>
        <begin position="693"/>
        <end position="713"/>
    </location>
</feature>
<feature type="binding site" evidence="1">
    <location>
        <position position="188"/>
    </location>
    <ligand>
        <name>substrate</name>
    </ligand>
</feature>
<feature type="binding site" evidence="1">
    <location>
        <position position="191"/>
    </location>
    <ligand>
        <name>Mg(2+)</name>
        <dbReference type="ChEBI" id="CHEBI:18420"/>
        <label>1</label>
    </ligand>
</feature>
<feature type="binding site" evidence="1">
    <location>
        <position position="195"/>
    </location>
    <ligand>
        <name>Mg(2+)</name>
        <dbReference type="ChEBI" id="CHEBI:18420"/>
        <label>1</label>
    </ligand>
</feature>
<feature type="binding site" evidence="1">
    <location>
        <position position="218"/>
    </location>
    <ligand>
        <name>Mg(2+)</name>
        <dbReference type="ChEBI" id="CHEBI:18420"/>
        <label>2</label>
    </ligand>
</feature>
<feature type="binding site" evidence="1">
    <location>
        <position position="221"/>
    </location>
    <ligand>
        <name>Mg(2+)</name>
        <dbReference type="ChEBI" id="CHEBI:18420"/>
        <label>2</label>
    </ligand>
</feature>
<feature type="binding site" evidence="1">
    <location>
        <position position="439"/>
    </location>
    <ligand>
        <name>Mg(2+)</name>
        <dbReference type="ChEBI" id="CHEBI:18420"/>
        <label>2</label>
    </ligand>
</feature>
<feature type="binding site" evidence="1">
    <location>
        <position position="648"/>
    </location>
    <ligand>
        <name>Ca(2+)</name>
        <dbReference type="ChEBI" id="CHEBI:29108"/>
    </ligand>
</feature>
<feature type="binding site" evidence="1">
    <location>
        <position position="680"/>
    </location>
    <ligand>
        <name>Ca(2+)</name>
        <dbReference type="ChEBI" id="CHEBI:29108"/>
    </ligand>
</feature>
<feature type="binding site" evidence="1">
    <location>
        <position position="684"/>
    </location>
    <ligand>
        <name>Ca(2+)</name>
        <dbReference type="ChEBI" id="CHEBI:29108"/>
    </ligand>
</feature>
<feature type="binding site" evidence="1">
    <location>
        <position position="687"/>
    </location>
    <ligand>
        <name>substrate</name>
    </ligand>
</feature>
<feature type="site" description="Important for ion transport" evidence="1">
    <location>
        <position position="180"/>
    </location>
</feature>
<feature type="site" description="Important for ion transport" evidence="1">
    <location>
        <position position="225"/>
    </location>
</feature>
<feature type="site" description="Important for ion transport" evidence="1">
    <location>
        <position position="232"/>
    </location>
</feature>
<feature type="site" description="Determinant of potassium independence" evidence="3">
    <location>
        <position position="469"/>
    </location>
</feature>
<feature type="site" description="Important for ion transport" evidence="1">
    <location>
        <position position="688"/>
    </location>
</feature>
<feature type="site" description="Important for ion transport" evidence="1">
    <location>
        <position position="699"/>
    </location>
</feature>
<feature type="sequence conflict" description="In Ref. 3; AAL14977." evidence="5" ref="3">
    <original>A</original>
    <variation>T</variation>
    <location>
        <position position="385"/>
    </location>
</feature>
<feature type="sequence conflict" description="In Ref. 3; AAL14977." evidence="5" ref="3">
    <original>G</original>
    <variation>A</variation>
    <location>
        <position position="409"/>
    </location>
</feature>
<feature type="sequence conflict" description="In Ref. 3; AAL14977." evidence="5" ref="3">
    <original>LDP</original>
    <variation>VDR</variation>
    <location>
        <begin position="450"/>
        <end position="452"/>
    </location>
</feature>
<feature type="sequence conflict" description="In Ref. 4; CAC80978." evidence="5" ref="4">
    <original>SM</original>
    <variation>PC</variation>
    <location>
        <begin position="639"/>
        <end position="640"/>
    </location>
</feature>
<feature type="sequence conflict" description="In Ref. 3; AAL14978." evidence="5" ref="3">
    <original>AIKI</original>
    <variation>GHQD</variation>
    <location>
        <begin position="697"/>
        <end position="700"/>
    </location>
</feature>
<proteinExistence type="evidence at protein level"/>